<reference key="1">
    <citation type="journal article" date="2009" name="PLoS Genet.">
        <title>Alliance of proteomics and genomics to unravel the specificities of Sahara bacterium Deinococcus deserti.</title>
        <authorList>
            <person name="de Groot A."/>
            <person name="Dulermo R."/>
            <person name="Ortet P."/>
            <person name="Blanchard L."/>
            <person name="Guerin P."/>
            <person name="Fernandez B."/>
            <person name="Vacherie B."/>
            <person name="Dossat C."/>
            <person name="Jolivet E."/>
            <person name="Siguier P."/>
            <person name="Chandler M."/>
            <person name="Barakat M."/>
            <person name="Dedieu A."/>
            <person name="Barbe V."/>
            <person name="Heulin T."/>
            <person name="Sommer S."/>
            <person name="Achouak W."/>
            <person name="Armengaud J."/>
        </authorList>
    </citation>
    <scope>NUCLEOTIDE SEQUENCE [LARGE SCALE GENOMIC DNA]</scope>
    <source>
        <strain>DSM 17065 / CIP 109153 / LMG 22923 / VCD115</strain>
    </source>
</reference>
<dbReference type="EC" id="2.7.1.48" evidence="1"/>
<dbReference type="EMBL" id="CP001114">
    <property type="protein sequence ID" value="ACO44837.1"/>
    <property type="molecule type" value="Genomic_DNA"/>
</dbReference>
<dbReference type="RefSeq" id="WP_012691960.1">
    <property type="nucleotide sequence ID" value="NC_012526.1"/>
</dbReference>
<dbReference type="SMR" id="C1CXN1"/>
<dbReference type="STRING" id="546414.Deide_00390"/>
<dbReference type="PaxDb" id="546414-Deide_00390"/>
<dbReference type="KEGG" id="ddr:Deide_00390"/>
<dbReference type="eggNOG" id="COG0572">
    <property type="taxonomic scope" value="Bacteria"/>
</dbReference>
<dbReference type="HOGENOM" id="CLU_021278_1_2_0"/>
<dbReference type="OrthoDB" id="9777642at2"/>
<dbReference type="UniPathway" id="UPA00574">
    <property type="reaction ID" value="UER00637"/>
</dbReference>
<dbReference type="UniPathway" id="UPA00579">
    <property type="reaction ID" value="UER00640"/>
</dbReference>
<dbReference type="Proteomes" id="UP000002208">
    <property type="component" value="Chromosome"/>
</dbReference>
<dbReference type="GO" id="GO:0005737">
    <property type="term" value="C:cytoplasm"/>
    <property type="evidence" value="ECO:0007669"/>
    <property type="project" value="UniProtKB-SubCell"/>
</dbReference>
<dbReference type="GO" id="GO:0005524">
    <property type="term" value="F:ATP binding"/>
    <property type="evidence" value="ECO:0007669"/>
    <property type="project" value="UniProtKB-UniRule"/>
</dbReference>
<dbReference type="GO" id="GO:0043771">
    <property type="term" value="F:cytidine kinase activity"/>
    <property type="evidence" value="ECO:0007669"/>
    <property type="project" value="RHEA"/>
</dbReference>
<dbReference type="GO" id="GO:0004849">
    <property type="term" value="F:uridine kinase activity"/>
    <property type="evidence" value="ECO:0007669"/>
    <property type="project" value="UniProtKB-UniRule"/>
</dbReference>
<dbReference type="GO" id="GO:0044211">
    <property type="term" value="P:CTP salvage"/>
    <property type="evidence" value="ECO:0007669"/>
    <property type="project" value="UniProtKB-UniRule"/>
</dbReference>
<dbReference type="GO" id="GO:0044206">
    <property type="term" value="P:UMP salvage"/>
    <property type="evidence" value="ECO:0007669"/>
    <property type="project" value="UniProtKB-UniRule"/>
</dbReference>
<dbReference type="CDD" id="cd02023">
    <property type="entry name" value="UMPK"/>
    <property type="match status" value="1"/>
</dbReference>
<dbReference type="Gene3D" id="3.40.50.300">
    <property type="entry name" value="P-loop containing nucleotide triphosphate hydrolases"/>
    <property type="match status" value="1"/>
</dbReference>
<dbReference type="HAMAP" id="MF_00551">
    <property type="entry name" value="Uridine_kinase"/>
    <property type="match status" value="1"/>
</dbReference>
<dbReference type="InterPro" id="IPR027417">
    <property type="entry name" value="P-loop_NTPase"/>
</dbReference>
<dbReference type="InterPro" id="IPR006083">
    <property type="entry name" value="PRK/URK"/>
</dbReference>
<dbReference type="InterPro" id="IPR026008">
    <property type="entry name" value="Uridine_kinase"/>
</dbReference>
<dbReference type="InterPro" id="IPR000764">
    <property type="entry name" value="Uridine_kinase-like"/>
</dbReference>
<dbReference type="NCBIfam" id="NF004018">
    <property type="entry name" value="PRK05480.1"/>
    <property type="match status" value="1"/>
</dbReference>
<dbReference type="NCBIfam" id="TIGR00235">
    <property type="entry name" value="udk"/>
    <property type="match status" value="1"/>
</dbReference>
<dbReference type="PANTHER" id="PTHR10285">
    <property type="entry name" value="URIDINE KINASE"/>
    <property type="match status" value="1"/>
</dbReference>
<dbReference type="Pfam" id="PF00485">
    <property type="entry name" value="PRK"/>
    <property type="match status" value="1"/>
</dbReference>
<dbReference type="PRINTS" id="PR00988">
    <property type="entry name" value="URIDINKINASE"/>
</dbReference>
<dbReference type="SUPFAM" id="SSF52540">
    <property type="entry name" value="P-loop containing nucleoside triphosphate hydrolases"/>
    <property type="match status" value="1"/>
</dbReference>
<evidence type="ECO:0000255" key="1">
    <source>
        <dbReference type="HAMAP-Rule" id="MF_00551"/>
    </source>
</evidence>
<comment type="catalytic activity">
    <reaction evidence="1">
        <text>uridine + ATP = UMP + ADP + H(+)</text>
        <dbReference type="Rhea" id="RHEA:16825"/>
        <dbReference type="ChEBI" id="CHEBI:15378"/>
        <dbReference type="ChEBI" id="CHEBI:16704"/>
        <dbReference type="ChEBI" id="CHEBI:30616"/>
        <dbReference type="ChEBI" id="CHEBI:57865"/>
        <dbReference type="ChEBI" id="CHEBI:456216"/>
        <dbReference type="EC" id="2.7.1.48"/>
    </reaction>
</comment>
<comment type="catalytic activity">
    <reaction evidence="1">
        <text>cytidine + ATP = CMP + ADP + H(+)</text>
        <dbReference type="Rhea" id="RHEA:24674"/>
        <dbReference type="ChEBI" id="CHEBI:15378"/>
        <dbReference type="ChEBI" id="CHEBI:17562"/>
        <dbReference type="ChEBI" id="CHEBI:30616"/>
        <dbReference type="ChEBI" id="CHEBI:60377"/>
        <dbReference type="ChEBI" id="CHEBI:456216"/>
        <dbReference type="EC" id="2.7.1.48"/>
    </reaction>
</comment>
<comment type="pathway">
    <text evidence="1">Pyrimidine metabolism; CTP biosynthesis via salvage pathway; CTP from cytidine: step 1/3.</text>
</comment>
<comment type="pathway">
    <text evidence="1">Pyrimidine metabolism; UMP biosynthesis via salvage pathway; UMP from uridine: step 1/1.</text>
</comment>
<comment type="subcellular location">
    <subcellularLocation>
        <location evidence="1">Cytoplasm</location>
    </subcellularLocation>
</comment>
<comment type="similarity">
    <text evidence="1">Belongs to the uridine kinase family.</text>
</comment>
<name>URK_DEIDV</name>
<proteinExistence type="inferred from homology"/>
<sequence>MTGHVRPFVIGVAGGSGSGKTTVTRRVIETVGGNGVSVLNQDNYYRDQSDIPFNARLNTNYDHPAAFDWPLLRSHLDALLSGVPIDMPEYDFTQHTRSAQASTVLPGAVVVLEGFFALYDEELRERMHLKVFVDADADVRFIRRLLRDTQERGRTPESVIQQYLEYVRPMHLSFVEPTKRYADVIIPHGGMNEPALDMLSARIRTTI</sequence>
<gene>
    <name evidence="1" type="primary">udk</name>
    <name type="ordered locus">Deide_00390</name>
</gene>
<accession>C1CXN1</accession>
<keyword id="KW-0067">ATP-binding</keyword>
<keyword id="KW-0963">Cytoplasm</keyword>
<keyword id="KW-0418">Kinase</keyword>
<keyword id="KW-0547">Nucleotide-binding</keyword>
<keyword id="KW-1185">Reference proteome</keyword>
<keyword id="KW-0808">Transferase</keyword>
<protein>
    <recommendedName>
        <fullName evidence="1">Uridine kinase</fullName>
        <ecNumber evidence="1">2.7.1.48</ecNumber>
    </recommendedName>
    <alternativeName>
        <fullName evidence="1">Cytidine monophosphokinase</fullName>
    </alternativeName>
    <alternativeName>
        <fullName evidence="1">Uridine monophosphokinase</fullName>
    </alternativeName>
</protein>
<organism>
    <name type="scientific">Deinococcus deserti (strain DSM 17065 / CIP 109153 / LMG 22923 / VCD115)</name>
    <dbReference type="NCBI Taxonomy" id="546414"/>
    <lineage>
        <taxon>Bacteria</taxon>
        <taxon>Thermotogati</taxon>
        <taxon>Deinococcota</taxon>
        <taxon>Deinococci</taxon>
        <taxon>Deinococcales</taxon>
        <taxon>Deinococcaceae</taxon>
        <taxon>Deinococcus</taxon>
    </lineage>
</organism>
<feature type="chain" id="PRO_1000211998" description="Uridine kinase">
    <location>
        <begin position="1"/>
        <end position="207"/>
    </location>
</feature>
<feature type="binding site" evidence="1">
    <location>
        <begin position="14"/>
        <end position="21"/>
    </location>
    <ligand>
        <name>ATP</name>
        <dbReference type="ChEBI" id="CHEBI:30616"/>
    </ligand>
</feature>